<comment type="function">
    <text evidence="1">Catalyzes the GTP-dependent ribosomal translocation step during translation elongation. During this step, the ribosome changes from the pre-translocational (PRE) to the post-translocational (POST) state as the newly formed A-site-bound peptidyl-tRNA and P-site-bound deacylated tRNA move to the P and E sites, respectively. Catalyzes the coordinated movement of the two tRNA molecules, the mRNA and conformational changes in the ribosome.</text>
</comment>
<comment type="subcellular location">
    <subcellularLocation>
        <location evidence="1">Cytoplasm</location>
    </subcellularLocation>
</comment>
<comment type="similarity">
    <text evidence="1">Belongs to the TRAFAC class translation factor GTPase superfamily. Classic translation factor GTPase family. EF-G/EF-2 subfamily.</text>
</comment>
<sequence>MAREYKIEDYRNFGIMAHIDAGKTTTTERILYYTGKSHKIGEVHDGAATMDWMEQEQERGITITSAATTTFWKGRDGKTRRFNIIDTPGHVDFTIEVERSLRVLDGAIALLDANAGVEPQTETVWRQAEKYHVPRMIFCNKMDKTGADFYRSVEMIKMRLGATAVVMQLPIGAESDFKGVIDLIEMNALVWRDESLGAQWDVVEIPADMKEKAEEYREKLIETVVEIDEAAMEAYLEGTYPDNDKIRELVRRGTIDVKFHPMFCGTAFKNKGVQPLLDAVVDYLPSPIDIPAIKGIDVKTEGEITRKADDNEPLSMLAFKIMNDPFVGSLTFARIYSGKLEKGTSVMNTVKEKRERVGRMLQMHSNSREDIEEAFAGDIVALAGLKETTTGDTLCDPLKPVILERMEFPEPVIQIAIEPKTKGDQEKMGLALNRLAAEDPSFRVKTDEESGQTIIAGMGELHLDIIVDRMRREFKVEASVGAPQVAYRETITRKHEEDYTHKKQSGGTGQFARVKIVFEPNPEGEDFAFESKIVGGAVPKEYIPGVQKGIESVLSSGPLAGFPMLGVKATLIDGAFHDVDSSVLAFEIASRACFREAAKKAGAQLLEPIMKVEVVTPEDYVGDVIGDLNSRRGQIQGQEARGVAVVINAHVPLANMFKYVDNLRSMSQGRAQYTMLFDHYAPVPSNVAQEIQAKYSGQK</sequence>
<organism>
    <name type="scientific">Rhizobium meliloti (strain 1021)</name>
    <name type="common">Ensifer meliloti</name>
    <name type="synonym">Sinorhizobium meliloti</name>
    <dbReference type="NCBI Taxonomy" id="266834"/>
    <lineage>
        <taxon>Bacteria</taxon>
        <taxon>Pseudomonadati</taxon>
        <taxon>Pseudomonadota</taxon>
        <taxon>Alphaproteobacteria</taxon>
        <taxon>Hyphomicrobiales</taxon>
        <taxon>Rhizobiaceae</taxon>
        <taxon>Sinorhizobium/Ensifer group</taxon>
        <taxon>Sinorhizobium</taxon>
    </lineage>
</organism>
<name>EFG_RHIME</name>
<evidence type="ECO:0000255" key="1">
    <source>
        <dbReference type="HAMAP-Rule" id="MF_00054"/>
    </source>
</evidence>
<protein>
    <recommendedName>
        <fullName evidence="1">Elongation factor G</fullName>
        <shortName evidence="1">EF-G</shortName>
    </recommendedName>
</protein>
<feature type="chain" id="PRO_0000091192" description="Elongation factor G">
    <location>
        <begin position="1"/>
        <end position="699"/>
    </location>
</feature>
<feature type="domain" description="tr-type G">
    <location>
        <begin position="8"/>
        <end position="288"/>
    </location>
</feature>
<feature type="binding site" evidence="1">
    <location>
        <begin position="17"/>
        <end position="24"/>
    </location>
    <ligand>
        <name>GTP</name>
        <dbReference type="ChEBI" id="CHEBI:37565"/>
    </ligand>
</feature>
<feature type="binding site" evidence="1">
    <location>
        <begin position="86"/>
        <end position="90"/>
    </location>
    <ligand>
        <name>GTP</name>
        <dbReference type="ChEBI" id="CHEBI:37565"/>
    </ligand>
</feature>
<feature type="binding site" evidence="1">
    <location>
        <begin position="140"/>
        <end position="143"/>
    </location>
    <ligand>
        <name>GTP</name>
        <dbReference type="ChEBI" id="CHEBI:37565"/>
    </ligand>
</feature>
<gene>
    <name evidence="1" type="primary">fusA</name>
    <name type="synonym">fusA1</name>
    <name type="ordered locus">R01353</name>
    <name type="ORF">SMc01312</name>
</gene>
<keyword id="KW-0963">Cytoplasm</keyword>
<keyword id="KW-0251">Elongation factor</keyword>
<keyword id="KW-0342">GTP-binding</keyword>
<keyword id="KW-0547">Nucleotide-binding</keyword>
<keyword id="KW-0648">Protein biosynthesis</keyword>
<keyword id="KW-1185">Reference proteome</keyword>
<proteinExistence type="inferred from homology"/>
<dbReference type="EMBL" id="AL591688">
    <property type="protein sequence ID" value="CAC45932.1"/>
    <property type="molecule type" value="Genomic_DNA"/>
</dbReference>
<dbReference type="RefSeq" id="NP_385459.1">
    <property type="nucleotide sequence ID" value="NC_003047.1"/>
</dbReference>
<dbReference type="RefSeq" id="WP_010969194.1">
    <property type="nucleotide sequence ID" value="NC_003047.1"/>
</dbReference>
<dbReference type="SMR" id="Q92QH2"/>
<dbReference type="EnsemblBacteria" id="CAC45932">
    <property type="protein sequence ID" value="CAC45932"/>
    <property type="gene ID" value="SMc01312"/>
</dbReference>
<dbReference type="KEGG" id="sme:SMc01312"/>
<dbReference type="PATRIC" id="fig|266834.11.peg.2768"/>
<dbReference type="eggNOG" id="COG0480">
    <property type="taxonomic scope" value="Bacteria"/>
</dbReference>
<dbReference type="HOGENOM" id="CLU_002794_4_1_5"/>
<dbReference type="OrthoDB" id="9802948at2"/>
<dbReference type="Proteomes" id="UP000001976">
    <property type="component" value="Chromosome"/>
</dbReference>
<dbReference type="GO" id="GO:0005737">
    <property type="term" value="C:cytoplasm"/>
    <property type="evidence" value="ECO:0007669"/>
    <property type="project" value="UniProtKB-SubCell"/>
</dbReference>
<dbReference type="GO" id="GO:0005525">
    <property type="term" value="F:GTP binding"/>
    <property type="evidence" value="ECO:0007669"/>
    <property type="project" value="UniProtKB-UniRule"/>
</dbReference>
<dbReference type="GO" id="GO:0003924">
    <property type="term" value="F:GTPase activity"/>
    <property type="evidence" value="ECO:0007669"/>
    <property type="project" value="InterPro"/>
</dbReference>
<dbReference type="GO" id="GO:0003746">
    <property type="term" value="F:translation elongation factor activity"/>
    <property type="evidence" value="ECO:0007669"/>
    <property type="project" value="UniProtKB-UniRule"/>
</dbReference>
<dbReference type="GO" id="GO:0032790">
    <property type="term" value="P:ribosome disassembly"/>
    <property type="evidence" value="ECO:0007669"/>
    <property type="project" value="TreeGrafter"/>
</dbReference>
<dbReference type="CDD" id="cd01886">
    <property type="entry name" value="EF-G"/>
    <property type="match status" value="1"/>
</dbReference>
<dbReference type="CDD" id="cd16262">
    <property type="entry name" value="EFG_III"/>
    <property type="match status" value="1"/>
</dbReference>
<dbReference type="CDD" id="cd01434">
    <property type="entry name" value="EFG_mtEFG1_IV"/>
    <property type="match status" value="1"/>
</dbReference>
<dbReference type="CDD" id="cd03713">
    <property type="entry name" value="EFG_mtEFG_C"/>
    <property type="match status" value="1"/>
</dbReference>
<dbReference type="CDD" id="cd04088">
    <property type="entry name" value="EFG_mtEFG_II"/>
    <property type="match status" value="1"/>
</dbReference>
<dbReference type="FunFam" id="2.40.30.10:FF:000006">
    <property type="entry name" value="Elongation factor G"/>
    <property type="match status" value="1"/>
</dbReference>
<dbReference type="FunFam" id="3.30.230.10:FF:000003">
    <property type="entry name" value="Elongation factor G"/>
    <property type="match status" value="1"/>
</dbReference>
<dbReference type="FunFam" id="3.30.70.240:FF:000001">
    <property type="entry name" value="Elongation factor G"/>
    <property type="match status" value="1"/>
</dbReference>
<dbReference type="FunFam" id="3.30.70.870:FF:000001">
    <property type="entry name" value="Elongation factor G"/>
    <property type="match status" value="1"/>
</dbReference>
<dbReference type="FunFam" id="3.40.50.300:FF:000029">
    <property type="entry name" value="Elongation factor G"/>
    <property type="match status" value="1"/>
</dbReference>
<dbReference type="Gene3D" id="3.30.230.10">
    <property type="match status" value="1"/>
</dbReference>
<dbReference type="Gene3D" id="3.30.70.240">
    <property type="match status" value="1"/>
</dbReference>
<dbReference type="Gene3D" id="3.30.70.870">
    <property type="entry name" value="Elongation Factor G (Translational Gtpase), domain 3"/>
    <property type="match status" value="1"/>
</dbReference>
<dbReference type="Gene3D" id="3.40.50.300">
    <property type="entry name" value="P-loop containing nucleotide triphosphate hydrolases"/>
    <property type="match status" value="1"/>
</dbReference>
<dbReference type="Gene3D" id="2.40.30.10">
    <property type="entry name" value="Translation factors"/>
    <property type="match status" value="1"/>
</dbReference>
<dbReference type="HAMAP" id="MF_00054_B">
    <property type="entry name" value="EF_G_EF_2_B"/>
    <property type="match status" value="1"/>
</dbReference>
<dbReference type="InterPro" id="IPR053905">
    <property type="entry name" value="EF-G-like_DII"/>
</dbReference>
<dbReference type="InterPro" id="IPR041095">
    <property type="entry name" value="EFG_II"/>
</dbReference>
<dbReference type="InterPro" id="IPR009022">
    <property type="entry name" value="EFG_III"/>
</dbReference>
<dbReference type="InterPro" id="IPR035647">
    <property type="entry name" value="EFG_III/V"/>
</dbReference>
<dbReference type="InterPro" id="IPR047872">
    <property type="entry name" value="EFG_IV"/>
</dbReference>
<dbReference type="InterPro" id="IPR035649">
    <property type="entry name" value="EFG_V"/>
</dbReference>
<dbReference type="InterPro" id="IPR000640">
    <property type="entry name" value="EFG_V-like"/>
</dbReference>
<dbReference type="InterPro" id="IPR031157">
    <property type="entry name" value="G_TR_CS"/>
</dbReference>
<dbReference type="InterPro" id="IPR027417">
    <property type="entry name" value="P-loop_NTPase"/>
</dbReference>
<dbReference type="InterPro" id="IPR020568">
    <property type="entry name" value="Ribosomal_Su5_D2-typ_SF"/>
</dbReference>
<dbReference type="InterPro" id="IPR014721">
    <property type="entry name" value="Ribsml_uS5_D2-typ_fold_subgr"/>
</dbReference>
<dbReference type="InterPro" id="IPR005225">
    <property type="entry name" value="Small_GTP-bd"/>
</dbReference>
<dbReference type="InterPro" id="IPR000795">
    <property type="entry name" value="T_Tr_GTP-bd_dom"/>
</dbReference>
<dbReference type="InterPro" id="IPR009000">
    <property type="entry name" value="Transl_B-barrel_sf"/>
</dbReference>
<dbReference type="InterPro" id="IPR004540">
    <property type="entry name" value="Transl_elong_EFG/EF2"/>
</dbReference>
<dbReference type="InterPro" id="IPR005517">
    <property type="entry name" value="Transl_elong_EFG/EF2_IV"/>
</dbReference>
<dbReference type="NCBIfam" id="TIGR00484">
    <property type="entry name" value="EF-G"/>
    <property type="match status" value="1"/>
</dbReference>
<dbReference type="NCBIfam" id="NF009381">
    <property type="entry name" value="PRK12740.1-5"/>
    <property type="match status" value="1"/>
</dbReference>
<dbReference type="NCBIfam" id="TIGR00231">
    <property type="entry name" value="small_GTP"/>
    <property type="match status" value="1"/>
</dbReference>
<dbReference type="PANTHER" id="PTHR43261:SF1">
    <property type="entry name" value="RIBOSOME-RELEASING FACTOR 2, MITOCHONDRIAL"/>
    <property type="match status" value="1"/>
</dbReference>
<dbReference type="PANTHER" id="PTHR43261">
    <property type="entry name" value="TRANSLATION ELONGATION FACTOR G-RELATED"/>
    <property type="match status" value="1"/>
</dbReference>
<dbReference type="Pfam" id="PF22042">
    <property type="entry name" value="EF-G_D2"/>
    <property type="match status" value="1"/>
</dbReference>
<dbReference type="Pfam" id="PF00679">
    <property type="entry name" value="EFG_C"/>
    <property type="match status" value="1"/>
</dbReference>
<dbReference type="Pfam" id="PF14492">
    <property type="entry name" value="EFG_III"/>
    <property type="match status" value="1"/>
</dbReference>
<dbReference type="Pfam" id="PF03764">
    <property type="entry name" value="EFG_IV"/>
    <property type="match status" value="1"/>
</dbReference>
<dbReference type="Pfam" id="PF00009">
    <property type="entry name" value="GTP_EFTU"/>
    <property type="match status" value="1"/>
</dbReference>
<dbReference type="PRINTS" id="PR00315">
    <property type="entry name" value="ELONGATNFCT"/>
</dbReference>
<dbReference type="SMART" id="SM00838">
    <property type="entry name" value="EFG_C"/>
    <property type="match status" value="1"/>
</dbReference>
<dbReference type="SMART" id="SM00889">
    <property type="entry name" value="EFG_IV"/>
    <property type="match status" value="1"/>
</dbReference>
<dbReference type="SUPFAM" id="SSF54980">
    <property type="entry name" value="EF-G C-terminal domain-like"/>
    <property type="match status" value="2"/>
</dbReference>
<dbReference type="SUPFAM" id="SSF52540">
    <property type="entry name" value="P-loop containing nucleoside triphosphate hydrolases"/>
    <property type="match status" value="1"/>
</dbReference>
<dbReference type="SUPFAM" id="SSF54211">
    <property type="entry name" value="Ribosomal protein S5 domain 2-like"/>
    <property type="match status" value="1"/>
</dbReference>
<dbReference type="SUPFAM" id="SSF50447">
    <property type="entry name" value="Translation proteins"/>
    <property type="match status" value="1"/>
</dbReference>
<dbReference type="PROSITE" id="PS00301">
    <property type="entry name" value="G_TR_1"/>
    <property type="match status" value="1"/>
</dbReference>
<dbReference type="PROSITE" id="PS51722">
    <property type="entry name" value="G_TR_2"/>
    <property type="match status" value="1"/>
</dbReference>
<accession>Q92QH2</accession>
<reference key="1">
    <citation type="journal article" date="2001" name="Proc. Natl. Acad. Sci. U.S.A.">
        <title>Analysis of the chromosome sequence of the legume symbiont Sinorhizobium meliloti strain 1021.</title>
        <authorList>
            <person name="Capela D."/>
            <person name="Barloy-Hubler F."/>
            <person name="Gouzy J."/>
            <person name="Bothe G."/>
            <person name="Ampe F."/>
            <person name="Batut J."/>
            <person name="Boistard P."/>
            <person name="Becker A."/>
            <person name="Boutry M."/>
            <person name="Cadieu E."/>
            <person name="Dreano S."/>
            <person name="Gloux S."/>
            <person name="Godrie T."/>
            <person name="Goffeau A."/>
            <person name="Kahn D."/>
            <person name="Kiss E."/>
            <person name="Lelaure V."/>
            <person name="Masuy D."/>
            <person name="Pohl T."/>
            <person name="Portetelle D."/>
            <person name="Puehler A."/>
            <person name="Purnelle B."/>
            <person name="Ramsperger U."/>
            <person name="Renard C."/>
            <person name="Thebault P."/>
            <person name="Vandenbol M."/>
            <person name="Weidner S."/>
            <person name="Galibert F."/>
        </authorList>
    </citation>
    <scope>NUCLEOTIDE SEQUENCE [LARGE SCALE GENOMIC DNA]</scope>
    <source>
        <strain>1021</strain>
    </source>
</reference>
<reference key="2">
    <citation type="journal article" date="2001" name="Science">
        <title>The composite genome of the legume symbiont Sinorhizobium meliloti.</title>
        <authorList>
            <person name="Galibert F."/>
            <person name="Finan T.M."/>
            <person name="Long S.R."/>
            <person name="Puehler A."/>
            <person name="Abola P."/>
            <person name="Ampe F."/>
            <person name="Barloy-Hubler F."/>
            <person name="Barnett M.J."/>
            <person name="Becker A."/>
            <person name="Boistard P."/>
            <person name="Bothe G."/>
            <person name="Boutry M."/>
            <person name="Bowser L."/>
            <person name="Buhrmester J."/>
            <person name="Cadieu E."/>
            <person name="Capela D."/>
            <person name="Chain P."/>
            <person name="Cowie A."/>
            <person name="Davis R.W."/>
            <person name="Dreano S."/>
            <person name="Federspiel N.A."/>
            <person name="Fisher R.F."/>
            <person name="Gloux S."/>
            <person name="Godrie T."/>
            <person name="Goffeau A."/>
            <person name="Golding B."/>
            <person name="Gouzy J."/>
            <person name="Gurjal M."/>
            <person name="Hernandez-Lucas I."/>
            <person name="Hong A."/>
            <person name="Huizar L."/>
            <person name="Hyman R.W."/>
            <person name="Jones T."/>
            <person name="Kahn D."/>
            <person name="Kahn M.L."/>
            <person name="Kalman S."/>
            <person name="Keating D.H."/>
            <person name="Kiss E."/>
            <person name="Komp C."/>
            <person name="Lelaure V."/>
            <person name="Masuy D."/>
            <person name="Palm C."/>
            <person name="Peck M.C."/>
            <person name="Pohl T.M."/>
            <person name="Portetelle D."/>
            <person name="Purnelle B."/>
            <person name="Ramsperger U."/>
            <person name="Surzycki R."/>
            <person name="Thebault P."/>
            <person name="Vandenbol M."/>
            <person name="Vorhoelter F.J."/>
            <person name="Weidner S."/>
            <person name="Wells D.H."/>
            <person name="Wong K."/>
            <person name="Yeh K.-C."/>
            <person name="Batut J."/>
        </authorList>
    </citation>
    <scope>NUCLEOTIDE SEQUENCE [LARGE SCALE GENOMIC DNA]</scope>
    <source>
        <strain>1021</strain>
    </source>
</reference>